<accession>Q9KD56</accession>
<name>YBEY_HALH5</name>
<reference key="1">
    <citation type="journal article" date="2000" name="Nucleic Acids Res.">
        <title>Complete genome sequence of the alkaliphilic bacterium Bacillus halodurans and genomic sequence comparison with Bacillus subtilis.</title>
        <authorList>
            <person name="Takami H."/>
            <person name="Nakasone K."/>
            <person name="Takaki Y."/>
            <person name="Maeno G."/>
            <person name="Sasaki R."/>
            <person name="Masui N."/>
            <person name="Fuji F."/>
            <person name="Hirama C."/>
            <person name="Nakamura Y."/>
            <person name="Ogasawara N."/>
            <person name="Kuhara S."/>
            <person name="Horikoshi K."/>
        </authorList>
    </citation>
    <scope>NUCLEOTIDE SEQUENCE [LARGE SCALE GENOMIC DNA]</scope>
    <source>
        <strain>ATCC BAA-125 / DSM 18197 / FERM 7344 / JCM 9153 / C-125</strain>
    </source>
</reference>
<feature type="chain" id="PRO_0000102407" description="Endoribonuclease YbeY">
    <location>
        <begin position="1"/>
        <end position="159"/>
    </location>
</feature>
<feature type="binding site" evidence="1">
    <location>
        <position position="124"/>
    </location>
    <ligand>
        <name>Zn(2+)</name>
        <dbReference type="ChEBI" id="CHEBI:29105"/>
        <note>catalytic</note>
    </ligand>
</feature>
<feature type="binding site" evidence="1">
    <location>
        <position position="128"/>
    </location>
    <ligand>
        <name>Zn(2+)</name>
        <dbReference type="ChEBI" id="CHEBI:29105"/>
        <note>catalytic</note>
    </ligand>
</feature>
<feature type="binding site" evidence="1">
    <location>
        <position position="134"/>
    </location>
    <ligand>
        <name>Zn(2+)</name>
        <dbReference type="ChEBI" id="CHEBI:29105"/>
        <note>catalytic</note>
    </ligand>
</feature>
<evidence type="ECO:0000255" key="1">
    <source>
        <dbReference type="HAMAP-Rule" id="MF_00009"/>
    </source>
</evidence>
<dbReference type="EC" id="3.1.-.-" evidence="1"/>
<dbReference type="EMBL" id="BA000004">
    <property type="protein sequence ID" value="BAB05082.1"/>
    <property type="molecule type" value="Genomic_DNA"/>
</dbReference>
<dbReference type="PIR" id="C83820">
    <property type="entry name" value="C83820"/>
</dbReference>
<dbReference type="RefSeq" id="WP_010897528.1">
    <property type="nucleotide sequence ID" value="NC_002570.2"/>
</dbReference>
<dbReference type="SMR" id="Q9KD56"/>
<dbReference type="STRING" id="272558.gene:10727257"/>
<dbReference type="KEGG" id="bha:BH1363"/>
<dbReference type="eggNOG" id="COG0319">
    <property type="taxonomic scope" value="Bacteria"/>
</dbReference>
<dbReference type="HOGENOM" id="CLU_106710_3_0_9"/>
<dbReference type="OrthoDB" id="9807740at2"/>
<dbReference type="Proteomes" id="UP000001258">
    <property type="component" value="Chromosome"/>
</dbReference>
<dbReference type="GO" id="GO:0005737">
    <property type="term" value="C:cytoplasm"/>
    <property type="evidence" value="ECO:0007669"/>
    <property type="project" value="UniProtKB-SubCell"/>
</dbReference>
<dbReference type="GO" id="GO:0004222">
    <property type="term" value="F:metalloendopeptidase activity"/>
    <property type="evidence" value="ECO:0007669"/>
    <property type="project" value="InterPro"/>
</dbReference>
<dbReference type="GO" id="GO:0004521">
    <property type="term" value="F:RNA endonuclease activity"/>
    <property type="evidence" value="ECO:0007669"/>
    <property type="project" value="UniProtKB-UniRule"/>
</dbReference>
<dbReference type="GO" id="GO:0008270">
    <property type="term" value="F:zinc ion binding"/>
    <property type="evidence" value="ECO:0007669"/>
    <property type="project" value="UniProtKB-UniRule"/>
</dbReference>
<dbReference type="GO" id="GO:0006364">
    <property type="term" value="P:rRNA processing"/>
    <property type="evidence" value="ECO:0007669"/>
    <property type="project" value="UniProtKB-UniRule"/>
</dbReference>
<dbReference type="Gene3D" id="3.40.390.30">
    <property type="entry name" value="Metalloproteases ('zincins'), catalytic domain"/>
    <property type="match status" value="1"/>
</dbReference>
<dbReference type="HAMAP" id="MF_00009">
    <property type="entry name" value="Endoribonucl_YbeY"/>
    <property type="match status" value="1"/>
</dbReference>
<dbReference type="InterPro" id="IPR023091">
    <property type="entry name" value="MetalPrtase_cat_dom_sf_prd"/>
</dbReference>
<dbReference type="InterPro" id="IPR002036">
    <property type="entry name" value="YbeY"/>
</dbReference>
<dbReference type="InterPro" id="IPR020549">
    <property type="entry name" value="YbeY_CS"/>
</dbReference>
<dbReference type="NCBIfam" id="TIGR00043">
    <property type="entry name" value="rRNA maturation RNase YbeY"/>
    <property type="match status" value="1"/>
</dbReference>
<dbReference type="PANTHER" id="PTHR46986">
    <property type="entry name" value="ENDORIBONUCLEASE YBEY, CHLOROPLASTIC"/>
    <property type="match status" value="1"/>
</dbReference>
<dbReference type="PANTHER" id="PTHR46986:SF1">
    <property type="entry name" value="ENDORIBONUCLEASE YBEY, CHLOROPLASTIC"/>
    <property type="match status" value="1"/>
</dbReference>
<dbReference type="Pfam" id="PF02130">
    <property type="entry name" value="YbeY"/>
    <property type="match status" value="1"/>
</dbReference>
<dbReference type="SUPFAM" id="SSF55486">
    <property type="entry name" value="Metalloproteases ('zincins'), catalytic domain"/>
    <property type="match status" value="1"/>
</dbReference>
<dbReference type="PROSITE" id="PS01306">
    <property type="entry name" value="UPF0054"/>
    <property type="match status" value="1"/>
</dbReference>
<organism>
    <name type="scientific">Halalkalibacterium halodurans (strain ATCC BAA-125 / DSM 18197 / FERM 7344 / JCM 9153 / C-125)</name>
    <name type="common">Bacillus halodurans</name>
    <dbReference type="NCBI Taxonomy" id="272558"/>
    <lineage>
        <taxon>Bacteria</taxon>
        <taxon>Bacillati</taxon>
        <taxon>Bacillota</taxon>
        <taxon>Bacilli</taxon>
        <taxon>Bacillales</taxon>
        <taxon>Bacillaceae</taxon>
        <taxon>Halalkalibacterium (ex Joshi et al. 2022)</taxon>
    </lineage>
</organism>
<protein>
    <recommendedName>
        <fullName evidence="1">Endoribonuclease YbeY</fullName>
        <ecNumber evidence="1">3.1.-.-</ecNumber>
    </recommendedName>
</protein>
<gene>
    <name evidence="1" type="primary">ybeY</name>
    <name type="ordered locus">BH1363</name>
</gene>
<sequence length="159" mass="18248">MNIQIDMIDHTDTLTEKQETLIRELLHEAARYEKLAEGTYELSLSFVSDEEIQELNRDYRGKDQPTDVISFALNEVGEGEQPVEPEAGTPNLLGDIIVSIPRCQEQAEAYGHSFERELAFLIVHGFLHLLGYDHMSEDEEKKMFMRQEDILTAYGLTRS</sequence>
<comment type="function">
    <text evidence="1">Single strand-specific metallo-endoribonuclease involved in late-stage 70S ribosome quality control and in maturation of the 3' terminus of the 16S rRNA.</text>
</comment>
<comment type="cofactor">
    <cofactor evidence="1">
        <name>Zn(2+)</name>
        <dbReference type="ChEBI" id="CHEBI:29105"/>
    </cofactor>
    <text evidence="1">Binds 1 zinc ion.</text>
</comment>
<comment type="subcellular location">
    <subcellularLocation>
        <location evidence="1">Cytoplasm</location>
    </subcellularLocation>
</comment>
<comment type="similarity">
    <text evidence="1">Belongs to the endoribonuclease YbeY family.</text>
</comment>
<proteinExistence type="inferred from homology"/>
<keyword id="KW-0963">Cytoplasm</keyword>
<keyword id="KW-0255">Endonuclease</keyword>
<keyword id="KW-0378">Hydrolase</keyword>
<keyword id="KW-0479">Metal-binding</keyword>
<keyword id="KW-0540">Nuclease</keyword>
<keyword id="KW-1185">Reference proteome</keyword>
<keyword id="KW-0690">Ribosome biogenesis</keyword>
<keyword id="KW-0698">rRNA processing</keyword>
<keyword id="KW-0862">Zinc</keyword>